<dbReference type="EC" id="2.7.3.2"/>
<dbReference type="EMBL" id="M18866">
    <property type="protein sequence ID" value="AAA48688.1"/>
    <property type="molecule type" value="mRNA"/>
</dbReference>
<dbReference type="PIR" id="A27708">
    <property type="entry name" value="A27708"/>
</dbReference>
<dbReference type="RefSeq" id="NP_001161216.1">
    <property type="nucleotide sequence ID" value="NM_001167744.1"/>
</dbReference>
<dbReference type="PDB" id="1CRK">
    <property type="method" value="X-ray"/>
    <property type="resolution" value="3.00 A"/>
    <property type="chains" value="A/B/C/D=40-419"/>
</dbReference>
<dbReference type="PDBsum" id="1CRK"/>
<dbReference type="SMR" id="P11009"/>
<dbReference type="FunCoup" id="P11009">
    <property type="interactions" value="144"/>
</dbReference>
<dbReference type="STRING" id="9031.ENSGALP00000032149"/>
<dbReference type="PaxDb" id="9031-ENSGALP00000032149"/>
<dbReference type="GeneID" id="396508"/>
<dbReference type="KEGG" id="gga:396508"/>
<dbReference type="CTD" id="1160"/>
<dbReference type="VEuPathDB" id="HostDB:geneid_396508"/>
<dbReference type="eggNOG" id="KOG3581">
    <property type="taxonomic scope" value="Eukaryota"/>
</dbReference>
<dbReference type="InParanoid" id="P11009"/>
<dbReference type="OrthoDB" id="430219at2759"/>
<dbReference type="PhylomeDB" id="P11009"/>
<dbReference type="BRENDA" id="2.7.3.2">
    <property type="organism ID" value="1306"/>
</dbReference>
<dbReference type="SABIO-RK" id="P11009"/>
<dbReference type="EvolutionaryTrace" id="P11009"/>
<dbReference type="PRO" id="PR:P11009"/>
<dbReference type="Proteomes" id="UP000000539">
    <property type="component" value="Unassembled WGS sequence"/>
</dbReference>
<dbReference type="GO" id="GO:0005743">
    <property type="term" value="C:mitochondrial inner membrane"/>
    <property type="evidence" value="ECO:0007669"/>
    <property type="project" value="UniProtKB-SubCell"/>
</dbReference>
<dbReference type="GO" id="GO:0005739">
    <property type="term" value="C:mitochondrion"/>
    <property type="evidence" value="ECO:0000318"/>
    <property type="project" value="GO_Central"/>
</dbReference>
<dbReference type="GO" id="GO:0005524">
    <property type="term" value="F:ATP binding"/>
    <property type="evidence" value="ECO:0007669"/>
    <property type="project" value="UniProtKB-KW"/>
</dbReference>
<dbReference type="GO" id="GO:0004111">
    <property type="term" value="F:creatine kinase activity"/>
    <property type="evidence" value="ECO:0000318"/>
    <property type="project" value="GO_Central"/>
</dbReference>
<dbReference type="GO" id="GO:0046314">
    <property type="term" value="P:phosphocreatine biosynthetic process"/>
    <property type="evidence" value="ECO:0000318"/>
    <property type="project" value="GO_Central"/>
</dbReference>
<dbReference type="CDD" id="cd00716">
    <property type="entry name" value="creatine_kinase_like"/>
    <property type="match status" value="1"/>
</dbReference>
<dbReference type="FunFam" id="3.30.590.10:FF:000002">
    <property type="entry name" value="Creatine kinase S-type, mitochondrial"/>
    <property type="match status" value="1"/>
</dbReference>
<dbReference type="FunFam" id="1.10.135.10:FF:000002">
    <property type="entry name" value="creatine kinase S-type, mitochondrial"/>
    <property type="match status" value="1"/>
</dbReference>
<dbReference type="Gene3D" id="1.10.135.10">
    <property type="entry name" value="ATP:guanido phosphotransferase, N-terminal domain"/>
    <property type="match status" value="1"/>
</dbReference>
<dbReference type="Gene3D" id="3.30.590.10">
    <property type="entry name" value="Glutamine synthetase/guanido kinase, catalytic domain"/>
    <property type="match status" value="1"/>
</dbReference>
<dbReference type="InterPro" id="IPR000749">
    <property type="entry name" value="ATP-guanido_PTrfase"/>
</dbReference>
<dbReference type="InterPro" id="IPR022415">
    <property type="entry name" value="ATP-guanido_PTrfase_AS"/>
</dbReference>
<dbReference type="InterPro" id="IPR022414">
    <property type="entry name" value="ATP-guanido_PTrfase_cat"/>
</dbReference>
<dbReference type="InterPro" id="IPR022413">
    <property type="entry name" value="ATP-guanido_PTrfase_N"/>
</dbReference>
<dbReference type="InterPro" id="IPR036802">
    <property type="entry name" value="ATP-guanido_PTrfase_N_sf"/>
</dbReference>
<dbReference type="InterPro" id="IPR014746">
    <property type="entry name" value="Gln_synth/guanido_kin_cat_dom"/>
</dbReference>
<dbReference type="PANTHER" id="PTHR11547">
    <property type="entry name" value="ARGININE OR CREATINE KINASE"/>
    <property type="match status" value="1"/>
</dbReference>
<dbReference type="PANTHER" id="PTHR11547:SF19">
    <property type="entry name" value="CREATINE KINASE S-TYPE, MITOCHONDRIAL"/>
    <property type="match status" value="1"/>
</dbReference>
<dbReference type="Pfam" id="PF00217">
    <property type="entry name" value="ATP-gua_Ptrans"/>
    <property type="match status" value="1"/>
</dbReference>
<dbReference type="Pfam" id="PF02807">
    <property type="entry name" value="ATP-gua_PtransN"/>
    <property type="match status" value="1"/>
</dbReference>
<dbReference type="SUPFAM" id="SSF55931">
    <property type="entry name" value="Glutamine synthetase/guanido kinase"/>
    <property type="match status" value="1"/>
</dbReference>
<dbReference type="SUPFAM" id="SSF48034">
    <property type="entry name" value="Guanido kinase N-terminal domain"/>
    <property type="match status" value="1"/>
</dbReference>
<dbReference type="PROSITE" id="PS00112">
    <property type="entry name" value="PHOSPHAGEN_KINASE"/>
    <property type="match status" value="1"/>
</dbReference>
<dbReference type="PROSITE" id="PS51510">
    <property type="entry name" value="PHOSPHAGEN_KINASE_C"/>
    <property type="match status" value="1"/>
</dbReference>
<dbReference type="PROSITE" id="PS51509">
    <property type="entry name" value="PHOSPHAGEN_KINASE_N"/>
    <property type="match status" value="1"/>
</dbReference>
<accession>P11009</accession>
<organism>
    <name type="scientific">Gallus gallus</name>
    <name type="common">Chicken</name>
    <dbReference type="NCBI Taxonomy" id="9031"/>
    <lineage>
        <taxon>Eukaryota</taxon>
        <taxon>Metazoa</taxon>
        <taxon>Chordata</taxon>
        <taxon>Craniata</taxon>
        <taxon>Vertebrata</taxon>
        <taxon>Euteleostomi</taxon>
        <taxon>Archelosauria</taxon>
        <taxon>Archosauria</taxon>
        <taxon>Dinosauria</taxon>
        <taxon>Saurischia</taxon>
        <taxon>Theropoda</taxon>
        <taxon>Coelurosauria</taxon>
        <taxon>Aves</taxon>
        <taxon>Neognathae</taxon>
        <taxon>Galloanserae</taxon>
        <taxon>Galliformes</taxon>
        <taxon>Phasianidae</taxon>
        <taxon>Phasianinae</taxon>
        <taxon>Gallus</taxon>
    </lineage>
</organism>
<name>KCRS_CHICK</name>
<proteinExistence type="evidence at protein level"/>
<evidence type="ECO:0000255" key="1">
    <source>
        <dbReference type="PROSITE-ProRule" id="PRU00842"/>
    </source>
</evidence>
<evidence type="ECO:0000255" key="2">
    <source>
        <dbReference type="PROSITE-ProRule" id="PRU00843"/>
    </source>
</evidence>
<evidence type="ECO:0000255" key="3">
    <source>
        <dbReference type="PROSITE-ProRule" id="PRU10029"/>
    </source>
</evidence>
<evidence type="ECO:0000269" key="4">
    <source>
    </source>
</evidence>
<evidence type="ECO:0000269" key="5">
    <source>
    </source>
</evidence>
<evidence type="ECO:0000269" key="6">
    <source>
    </source>
</evidence>
<evidence type="ECO:0000305" key="7"/>
<evidence type="ECO:0007829" key="8">
    <source>
        <dbReference type="PDB" id="1CRK"/>
    </source>
</evidence>
<sequence>MAGTFGRLLAGRVTAALFAAAGSGVLTTGYLLNQQNVKATVHEKRKLFPPSADYPDLRKHNNCMAECLTPAIYAKLRDKLTPNGYSLDQCIQTGVDNPGHPFIKTVGMVAGDEESYEVFAEIFDPVIKARHNGYDPRTMKHHTDLDASKITHGQFDERYVLSSRVRTGRSIRGLSLPPACSRAERREVENVVVTALAGLKGDLSGKYYSLTNMSERDQQQLIDDHFLFDKPVSPLLTCAGMARDWPDARGIWHNNDKTFLVWINEEDHTRVISMEKGGNMKRVFERFCRGLKEVERLIKERGWEFMWNERLGYVLTCPSNLGTGLRAGVHVKLPRLSKDPRFPKILENLRLQKRGTGGVDTAAVADVYDISNLDRMGRSEVELVQIVIDGVNYLVDCEKKLEKGQDIKVPPPLPQFGRK</sequence>
<keyword id="KW-0002">3D-structure</keyword>
<keyword id="KW-0067">ATP-binding</keyword>
<keyword id="KW-0903">Direct protein sequencing</keyword>
<keyword id="KW-0418">Kinase</keyword>
<keyword id="KW-0472">Membrane</keyword>
<keyword id="KW-0496">Mitochondrion</keyword>
<keyword id="KW-0999">Mitochondrion inner membrane</keyword>
<keyword id="KW-0547">Nucleotide-binding</keyword>
<keyword id="KW-1185">Reference proteome</keyword>
<keyword id="KW-0808">Transferase</keyword>
<keyword id="KW-0809">Transit peptide</keyword>
<protein>
    <recommendedName>
        <fullName>Creatine kinase S-type, mitochondrial</fullName>
        <ecNumber>2.7.3.2</ecNumber>
    </recommendedName>
    <alternativeName>
        <fullName>Basic-type mitochondrial creatine kinase</fullName>
        <shortName>Mib-CK</shortName>
    </alternativeName>
    <alternativeName>
        <fullName>Sarcomeric mitochondrial creatine kinase</fullName>
        <shortName>S-MtCK</shortName>
    </alternativeName>
</protein>
<reference key="1">
    <citation type="journal article" date="1996" name="J. Biol. Chem.">
        <title>Evolution of the creative kinases. The chicken acidic type mitochondrial creatine kinase gene as the first nonmammalian gene.</title>
        <authorList>
            <person name="Muehlebach S.M."/>
            <person name="Wirz T."/>
            <person name="Braendle U."/>
            <person name="Perriard J.-C."/>
        </authorList>
    </citation>
    <scope>NUCLEOTIDE SEQUENCE [MRNA] OF 1-39</scope>
    <source>
        <strain>White leghorn</strain>
    </source>
</reference>
<reference key="2">
    <citation type="journal article" date="1988" name="Biochem. Biophys. Res. Commun.">
        <title>Distinct tissue specific mitochondrial creatine kinases from chicken brain and striated muscle with a conserved CK framework.</title>
        <authorList>
            <person name="Hossle J.P."/>
            <person name="Schlegel J."/>
            <person name="Wegmann G."/>
            <person name="Wyss M."/>
            <person name="Boehlen P."/>
            <person name="Eppenberger H.M."/>
            <person name="Wallimann T."/>
            <person name="Perriard J.-C."/>
        </authorList>
    </citation>
    <scope>NUCLEOTIDE SEQUENCE [MRNA] OF 20-419</scope>
    <scope>PROTEIN SEQUENCE OF 40-69</scope>
    <source>
        <tissue>Heart</tissue>
        <tissue>Skeletal muscle</tissue>
    </source>
</reference>
<reference key="3">
    <citation type="journal article" date="1994" name="Biochemistry">
        <title>The N-terminal heptapeptide of mitochondrial creatine kinase is important for octamerization.</title>
        <authorList>
            <person name="Kaldis P."/>
            <person name="Furter R."/>
            <person name="Wallimann T."/>
        </authorList>
    </citation>
    <scope>PROTEIN SEQUENCE OF 40-48</scope>
</reference>
<reference key="4">
    <citation type="journal article" date="1996" name="Nature">
        <title>Structure of mitochondrial creatine kinase.</title>
        <authorList>
            <person name="Fritz-Wolf K."/>
            <person name="Schnyder T."/>
            <person name="Wallimann T."/>
            <person name="Kabsch W."/>
        </authorList>
    </citation>
    <scope>X-RAY CRYSTALLOGRAPHY (3.0 ANGSTROMS)</scope>
    <scope>SUBUNIT</scope>
</reference>
<feature type="transit peptide" description="Mitochondrion" evidence="4 5">
    <location>
        <begin position="1"/>
        <end position="39"/>
    </location>
</feature>
<feature type="chain" id="PRO_0000016599" description="Creatine kinase S-type, mitochondrial">
    <location>
        <begin position="40"/>
        <end position="419"/>
    </location>
</feature>
<feature type="domain" description="Phosphagen kinase N-terminal" evidence="1">
    <location>
        <begin position="46"/>
        <end position="132"/>
    </location>
</feature>
<feature type="domain" description="Phosphagen kinase C-terminal" evidence="2">
    <location>
        <begin position="159"/>
        <end position="401"/>
    </location>
</feature>
<feature type="binding site" evidence="2">
    <location>
        <begin position="162"/>
        <end position="166"/>
    </location>
    <ligand>
        <name>ATP</name>
        <dbReference type="ChEBI" id="CHEBI:30616"/>
    </ligand>
</feature>
<feature type="binding site" evidence="2">
    <location>
        <position position="225"/>
    </location>
    <ligand>
        <name>ATP</name>
        <dbReference type="ChEBI" id="CHEBI:30616"/>
    </ligand>
</feature>
<feature type="binding site" evidence="2">
    <location>
        <position position="270"/>
    </location>
    <ligand>
        <name>ATP</name>
        <dbReference type="ChEBI" id="CHEBI:30616"/>
    </ligand>
</feature>
<feature type="binding site" evidence="2">
    <location>
        <position position="326"/>
    </location>
    <ligand>
        <name>ATP</name>
        <dbReference type="ChEBI" id="CHEBI:30616"/>
    </ligand>
</feature>
<feature type="binding site" evidence="2">
    <location>
        <begin position="354"/>
        <end position="359"/>
    </location>
    <ligand>
        <name>ATP</name>
        <dbReference type="ChEBI" id="CHEBI:30616"/>
    </ligand>
</feature>
<feature type="binding site" evidence="2">
    <location>
        <position position="369"/>
    </location>
    <ligand>
        <name>ATP</name>
        <dbReference type="ChEBI" id="CHEBI:30616"/>
    </ligand>
</feature>
<feature type="sequence conflict" description="In Ref. 2; AAA48688." evidence="7" ref="2">
    <original>AAGS</original>
    <variation>CSRQ</variation>
    <location>
        <begin position="20"/>
        <end position="23"/>
    </location>
</feature>
<feature type="helix" evidence="8">
    <location>
        <begin position="50"/>
        <end position="53"/>
    </location>
</feature>
<feature type="helix" evidence="8">
    <location>
        <begin position="63"/>
        <end position="67"/>
    </location>
</feature>
<feature type="helix" evidence="8">
    <location>
        <begin position="70"/>
        <end position="76"/>
    </location>
</feature>
<feature type="helix" evidence="8">
    <location>
        <begin position="87"/>
        <end position="96"/>
    </location>
</feature>
<feature type="helix" evidence="8">
    <location>
        <begin position="115"/>
        <end position="118"/>
    </location>
</feature>
<feature type="helix" evidence="8">
    <location>
        <begin position="120"/>
        <end position="130"/>
    </location>
</feature>
<feature type="turn" evidence="8">
    <location>
        <begin position="131"/>
        <end position="133"/>
    </location>
</feature>
<feature type="turn" evidence="8">
    <location>
        <begin position="136"/>
        <end position="138"/>
    </location>
</feature>
<feature type="helix" evidence="8">
    <location>
        <begin position="147"/>
        <end position="149"/>
    </location>
</feature>
<feature type="turn" evidence="8">
    <location>
        <begin position="157"/>
        <end position="159"/>
    </location>
</feature>
<feature type="strand" evidence="8">
    <location>
        <begin position="160"/>
        <end position="169"/>
    </location>
</feature>
<feature type="turn" evidence="8">
    <location>
        <begin position="177"/>
        <end position="179"/>
    </location>
</feature>
<feature type="helix" evidence="8">
    <location>
        <begin position="182"/>
        <end position="197"/>
    </location>
</feature>
<feature type="helix" evidence="8">
    <location>
        <begin position="201"/>
        <end position="203"/>
    </location>
</feature>
<feature type="strand" evidence="8">
    <location>
        <begin position="205"/>
        <end position="212"/>
    </location>
</feature>
<feature type="helix" evidence="8">
    <location>
        <begin position="215"/>
        <end position="223"/>
    </location>
</feature>
<feature type="helix" evidence="8">
    <location>
        <begin position="234"/>
        <end position="237"/>
    </location>
</feature>
<feature type="turn" evidence="8">
    <location>
        <begin position="238"/>
        <end position="240"/>
    </location>
</feature>
<feature type="turn" evidence="8">
    <location>
        <begin position="243"/>
        <end position="248"/>
    </location>
</feature>
<feature type="strand" evidence="8">
    <location>
        <begin position="250"/>
        <end position="254"/>
    </location>
</feature>
<feature type="strand" evidence="8">
    <location>
        <begin position="259"/>
        <end position="278"/>
    </location>
</feature>
<feature type="helix" evidence="8">
    <location>
        <begin position="280"/>
        <end position="300"/>
    </location>
</feature>
<feature type="turn" evidence="8">
    <location>
        <begin position="309"/>
        <end position="311"/>
    </location>
</feature>
<feature type="helix" evidence="8">
    <location>
        <begin position="318"/>
        <end position="320"/>
    </location>
</feature>
<feature type="strand" evidence="8">
    <location>
        <begin position="326"/>
        <end position="332"/>
    </location>
</feature>
<feature type="helix" evidence="8">
    <location>
        <begin position="334"/>
        <end position="338"/>
    </location>
</feature>
<feature type="helix" evidence="8">
    <location>
        <begin position="342"/>
        <end position="349"/>
    </location>
</feature>
<feature type="strand" evidence="8">
    <location>
        <begin position="351"/>
        <end position="354"/>
    </location>
</feature>
<feature type="turn" evidence="8">
    <location>
        <begin position="359"/>
        <end position="363"/>
    </location>
</feature>
<feature type="strand" evidence="8">
    <location>
        <begin position="367"/>
        <end position="372"/>
    </location>
</feature>
<feature type="strand" evidence="8">
    <location>
        <begin position="375"/>
        <end position="378"/>
    </location>
</feature>
<feature type="helix" evidence="8">
    <location>
        <begin position="380"/>
        <end position="402"/>
    </location>
</feature>
<comment type="function">
    <text>Reversibly catalyzes the transfer of phosphate between ATP and various phosphogens (e.g. creatine phosphate). Creatine kinase isoenzymes play a central role in energy transduction in tissues with large, fluctuating energy demands, such as skeletal muscle, heart, brain and spermatozoa.</text>
</comment>
<comment type="catalytic activity">
    <reaction evidence="3">
        <text>creatine + ATP = N-phosphocreatine + ADP + H(+)</text>
        <dbReference type="Rhea" id="RHEA:17157"/>
        <dbReference type="ChEBI" id="CHEBI:15378"/>
        <dbReference type="ChEBI" id="CHEBI:30616"/>
        <dbReference type="ChEBI" id="CHEBI:57947"/>
        <dbReference type="ChEBI" id="CHEBI:58092"/>
        <dbReference type="ChEBI" id="CHEBI:456216"/>
        <dbReference type="EC" id="2.7.3.2"/>
    </reaction>
</comment>
<comment type="subunit">
    <text evidence="6">Exists as an octamer composed of four MTCK homodimers.</text>
</comment>
<comment type="subcellular location">
    <subcellularLocation>
        <location>Mitochondrion inner membrane</location>
        <topology>Peripheral membrane protein</topology>
        <orientation>Intermembrane side</orientation>
    </subcellularLocation>
</comment>
<comment type="tissue specificity">
    <text>Expressed in the leg muscle and heart.</text>
</comment>
<comment type="miscellaneous">
    <text>Mitochondrial creatine kinase binds cardiolipin.</text>
</comment>
<comment type="similarity">
    <text evidence="1 2">Belongs to the ATP:guanido phosphotransferase family.</text>
</comment>
<gene>
    <name type="primary">CKMT2</name>
</gene>